<sequence>MKTFTAKPESVQRDWYVVDATGKTLGRLATELARRLRGKHKAEYTPHVDTGDYIIVLNAEKVAVTGNKRSDKIYYHHTGHIGGIKQATFEEMIARRPERVIEIAVKGMLPKGPLGRAMYRKLKVYAGNEHNHAAQQPQVLDI</sequence>
<reference key="1">
    <citation type="journal article" date="2008" name="Environ. Microbiol.">
        <title>The genome of Erwinia tasmaniensis strain Et1/99, a non-pathogenic bacterium in the genus Erwinia.</title>
        <authorList>
            <person name="Kube M."/>
            <person name="Migdoll A.M."/>
            <person name="Mueller I."/>
            <person name="Kuhl H."/>
            <person name="Beck A."/>
            <person name="Reinhardt R."/>
            <person name="Geider K."/>
        </authorList>
    </citation>
    <scope>NUCLEOTIDE SEQUENCE [LARGE SCALE GENOMIC DNA]</scope>
    <source>
        <strain>DSM 17950 / CFBP 7177 / CIP 109463 / NCPPB 4357 / Et1/99</strain>
    </source>
</reference>
<keyword id="KW-1185">Reference proteome</keyword>
<keyword id="KW-0687">Ribonucleoprotein</keyword>
<keyword id="KW-0689">Ribosomal protein</keyword>
<evidence type="ECO:0000255" key="1">
    <source>
        <dbReference type="HAMAP-Rule" id="MF_01366"/>
    </source>
</evidence>
<evidence type="ECO:0000305" key="2"/>
<protein>
    <recommendedName>
        <fullName evidence="1">Large ribosomal subunit protein uL13</fullName>
    </recommendedName>
    <alternativeName>
        <fullName evidence="2">50S ribosomal protein L13</fullName>
    </alternativeName>
</protein>
<proteinExistence type="inferred from homology"/>
<name>RL13_ERWT9</name>
<gene>
    <name evidence="1" type="primary">rplM</name>
    <name type="ordered locus">ETA_03030</name>
</gene>
<dbReference type="EMBL" id="CU468135">
    <property type="protein sequence ID" value="CAO95349.1"/>
    <property type="molecule type" value="Genomic_DNA"/>
</dbReference>
<dbReference type="RefSeq" id="WP_004155066.1">
    <property type="nucleotide sequence ID" value="NC_010694.1"/>
</dbReference>
<dbReference type="SMR" id="B2VGX3"/>
<dbReference type="STRING" id="465817.ETA_03030"/>
<dbReference type="GeneID" id="97604650"/>
<dbReference type="KEGG" id="eta:ETA_03030"/>
<dbReference type="eggNOG" id="COG0102">
    <property type="taxonomic scope" value="Bacteria"/>
</dbReference>
<dbReference type="HOGENOM" id="CLU_082184_2_2_6"/>
<dbReference type="OrthoDB" id="9801330at2"/>
<dbReference type="Proteomes" id="UP000001726">
    <property type="component" value="Chromosome"/>
</dbReference>
<dbReference type="GO" id="GO:0022625">
    <property type="term" value="C:cytosolic large ribosomal subunit"/>
    <property type="evidence" value="ECO:0007669"/>
    <property type="project" value="TreeGrafter"/>
</dbReference>
<dbReference type="GO" id="GO:0003729">
    <property type="term" value="F:mRNA binding"/>
    <property type="evidence" value="ECO:0007669"/>
    <property type="project" value="TreeGrafter"/>
</dbReference>
<dbReference type="GO" id="GO:0003735">
    <property type="term" value="F:structural constituent of ribosome"/>
    <property type="evidence" value="ECO:0007669"/>
    <property type="project" value="InterPro"/>
</dbReference>
<dbReference type="GO" id="GO:0017148">
    <property type="term" value="P:negative regulation of translation"/>
    <property type="evidence" value="ECO:0007669"/>
    <property type="project" value="TreeGrafter"/>
</dbReference>
<dbReference type="GO" id="GO:0006412">
    <property type="term" value="P:translation"/>
    <property type="evidence" value="ECO:0007669"/>
    <property type="project" value="UniProtKB-UniRule"/>
</dbReference>
<dbReference type="CDD" id="cd00392">
    <property type="entry name" value="Ribosomal_L13"/>
    <property type="match status" value="1"/>
</dbReference>
<dbReference type="FunFam" id="3.90.1180.10:FF:000001">
    <property type="entry name" value="50S ribosomal protein L13"/>
    <property type="match status" value="1"/>
</dbReference>
<dbReference type="Gene3D" id="3.90.1180.10">
    <property type="entry name" value="Ribosomal protein L13"/>
    <property type="match status" value="1"/>
</dbReference>
<dbReference type="HAMAP" id="MF_01366">
    <property type="entry name" value="Ribosomal_uL13"/>
    <property type="match status" value="1"/>
</dbReference>
<dbReference type="InterPro" id="IPR005822">
    <property type="entry name" value="Ribosomal_uL13"/>
</dbReference>
<dbReference type="InterPro" id="IPR005823">
    <property type="entry name" value="Ribosomal_uL13_bac-type"/>
</dbReference>
<dbReference type="InterPro" id="IPR023563">
    <property type="entry name" value="Ribosomal_uL13_CS"/>
</dbReference>
<dbReference type="InterPro" id="IPR036899">
    <property type="entry name" value="Ribosomal_uL13_sf"/>
</dbReference>
<dbReference type="NCBIfam" id="TIGR01066">
    <property type="entry name" value="rplM_bact"/>
    <property type="match status" value="1"/>
</dbReference>
<dbReference type="PANTHER" id="PTHR11545:SF2">
    <property type="entry name" value="LARGE RIBOSOMAL SUBUNIT PROTEIN UL13M"/>
    <property type="match status" value="1"/>
</dbReference>
<dbReference type="PANTHER" id="PTHR11545">
    <property type="entry name" value="RIBOSOMAL PROTEIN L13"/>
    <property type="match status" value="1"/>
</dbReference>
<dbReference type="Pfam" id="PF00572">
    <property type="entry name" value="Ribosomal_L13"/>
    <property type="match status" value="1"/>
</dbReference>
<dbReference type="PIRSF" id="PIRSF002181">
    <property type="entry name" value="Ribosomal_L13"/>
    <property type="match status" value="1"/>
</dbReference>
<dbReference type="SUPFAM" id="SSF52161">
    <property type="entry name" value="Ribosomal protein L13"/>
    <property type="match status" value="1"/>
</dbReference>
<dbReference type="PROSITE" id="PS00783">
    <property type="entry name" value="RIBOSOMAL_L13"/>
    <property type="match status" value="1"/>
</dbReference>
<organism>
    <name type="scientific">Erwinia tasmaniensis (strain DSM 17950 / CFBP 7177 / CIP 109463 / NCPPB 4357 / Et1/99)</name>
    <dbReference type="NCBI Taxonomy" id="465817"/>
    <lineage>
        <taxon>Bacteria</taxon>
        <taxon>Pseudomonadati</taxon>
        <taxon>Pseudomonadota</taxon>
        <taxon>Gammaproteobacteria</taxon>
        <taxon>Enterobacterales</taxon>
        <taxon>Erwiniaceae</taxon>
        <taxon>Erwinia</taxon>
    </lineage>
</organism>
<feature type="chain" id="PRO_1000144128" description="Large ribosomal subunit protein uL13">
    <location>
        <begin position="1"/>
        <end position="142"/>
    </location>
</feature>
<accession>B2VGX3</accession>
<comment type="function">
    <text evidence="1">This protein is one of the early assembly proteins of the 50S ribosomal subunit, although it is not seen to bind rRNA by itself. It is important during the early stages of 50S assembly.</text>
</comment>
<comment type="subunit">
    <text evidence="1">Part of the 50S ribosomal subunit.</text>
</comment>
<comment type="similarity">
    <text evidence="1">Belongs to the universal ribosomal protein uL13 family.</text>
</comment>